<evidence type="ECO:0000250" key="1">
    <source>
        <dbReference type="UniProtKB" id="Q59701"/>
    </source>
</evidence>
<evidence type="ECO:0000250" key="2">
    <source>
        <dbReference type="UniProtKB" id="Q88H32"/>
    </source>
</evidence>
<evidence type="ECO:0000303" key="3">
    <source>
    </source>
</evidence>
<evidence type="ECO:0000305" key="4"/>
<evidence type="ECO:0000312" key="5">
    <source>
        <dbReference type="EMBL" id="AAX75765.1"/>
    </source>
</evidence>
<comment type="function">
    <text evidence="1">Catalyzes the conversion of L-ornithine into L-proline with release of ammonia.</text>
</comment>
<comment type="catalytic activity">
    <reaction evidence="1">
        <text>L-ornithine = L-proline + NH4(+)</text>
        <dbReference type="Rhea" id="RHEA:24368"/>
        <dbReference type="ChEBI" id="CHEBI:28938"/>
        <dbReference type="ChEBI" id="CHEBI:46911"/>
        <dbReference type="ChEBI" id="CHEBI:60039"/>
        <dbReference type="EC" id="4.3.1.12"/>
    </reaction>
</comment>
<comment type="cofactor">
    <cofactor evidence="1">
        <name>NAD(+)</name>
        <dbReference type="ChEBI" id="CHEBI:57540"/>
    </cofactor>
</comment>
<comment type="pathway">
    <text evidence="1">Amino-acid biosynthesis; L-proline biosynthesis; L-proline from L-ornithine: step 1/1.</text>
</comment>
<comment type="similarity">
    <text evidence="4">Belongs to the ornithine cyclodeaminase/mu-crystallin family.</text>
</comment>
<comment type="sequence caution" evidence="4">
    <conflict type="erroneous initiation">
        <sequence resource="EMBL-CDS" id="AAX75765"/>
    </conflict>
</comment>
<reference key="1">
    <citation type="journal article" date="1997" name="Biochim. Biophys. Acta">
        <title>Brucella abortus arginase and ornithine cyclodeaminase genes are similar to Ti plasmid arginase and ornithine cyclodeaminase.</title>
        <authorList>
            <person name="Kim J."/>
            <person name="Mayfield J.E."/>
        </authorList>
    </citation>
    <scope>NUCLEOTIDE SEQUENCE [GENOMIC DNA]</scope>
    <source>
        <strain>19</strain>
    </source>
</reference>
<reference key="2">
    <citation type="journal article" date="2005" name="J. Bacteriol.">
        <title>Completion of the genome sequence of Brucella abortus and comparison to the highly similar genomes of Brucella melitensis and Brucella suis.</title>
        <authorList>
            <person name="Halling S.M."/>
            <person name="Peterson-Burch B.D."/>
            <person name="Bricker B.J."/>
            <person name="Zuerner R.L."/>
            <person name="Qing Z."/>
            <person name="Li L.-L."/>
            <person name="Kapur V."/>
            <person name="Alt D.P."/>
            <person name="Olsen S.C."/>
        </authorList>
    </citation>
    <scope>NUCLEOTIDE SEQUENCE [LARGE SCALE GENOMIC DNA]</scope>
    <source>
        <strain>9-941</strain>
    </source>
</reference>
<keyword id="KW-0056">Arginine metabolism</keyword>
<keyword id="KW-0456">Lyase</keyword>
<keyword id="KW-0520">NAD</keyword>
<proteinExistence type="inferred from homology"/>
<organism>
    <name type="scientific">Brucella abortus biovar 1 (strain 9-941)</name>
    <dbReference type="NCBI Taxonomy" id="262698"/>
    <lineage>
        <taxon>Bacteria</taxon>
        <taxon>Pseudomonadati</taxon>
        <taxon>Pseudomonadota</taxon>
        <taxon>Alphaproteobacteria</taxon>
        <taxon>Hyphomicrobiales</taxon>
        <taxon>Brucellaceae</taxon>
        <taxon>Brucella/Ochrobactrum group</taxon>
        <taxon>Brucella</taxon>
    </lineage>
</organism>
<feature type="chain" id="PRO_0000200670" description="Ornithine cyclodeaminase">
    <location>
        <begin position="1"/>
        <end position="359"/>
    </location>
</feature>
<feature type="active site" description="Proton donor/acceptor" evidence="2">
    <location>
        <position position="235"/>
    </location>
</feature>
<feature type="binding site" evidence="2">
    <location>
        <position position="53"/>
    </location>
    <ligand>
        <name>L-ornithine</name>
        <dbReference type="ChEBI" id="CHEBI:46911"/>
    </ligand>
</feature>
<feature type="binding site" evidence="2">
    <location>
        <position position="77"/>
    </location>
    <ligand>
        <name>L-ornithine</name>
        <dbReference type="ChEBI" id="CHEBI:46911"/>
    </ligand>
</feature>
<feature type="binding site" evidence="2">
    <location>
        <position position="92"/>
    </location>
    <ligand>
        <name>NAD(+)</name>
        <dbReference type="ChEBI" id="CHEBI:57540"/>
    </ligand>
</feature>
<feature type="binding site" evidence="2">
    <location>
        <position position="120"/>
    </location>
    <ligand>
        <name>L-ornithine</name>
        <dbReference type="ChEBI" id="CHEBI:46911"/>
    </ligand>
</feature>
<feature type="binding site" evidence="2">
    <location>
        <position position="120"/>
    </location>
    <ligand>
        <name>NAD(+)</name>
        <dbReference type="ChEBI" id="CHEBI:57540"/>
    </ligand>
</feature>
<feature type="binding site" evidence="2">
    <location>
        <begin position="147"/>
        <end position="148"/>
    </location>
    <ligand>
        <name>NAD(+)</name>
        <dbReference type="ChEBI" id="CHEBI:57540"/>
    </ligand>
</feature>
<feature type="binding site" evidence="2">
    <location>
        <position position="169"/>
    </location>
    <ligand>
        <name>NAD(+)</name>
        <dbReference type="ChEBI" id="CHEBI:57540"/>
    </ligand>
</feature>
<feature type="binding site" evidence="2">
    <location>
        <position position="209"/>
    </location>
    <ligand>
        <name>NAD(+)</name>
        <dbReference type="ChEBI" id="CHEBI:57540"/>
    </ligand>
</feature>
<feature type="binding site" evidence="2">
    <location>
        <begin position="232"/>
        <end position="235"/>
    </location>
    <ligand>
        <name>NAD(+)</name>
        <dbReference type="ChEBI" id="CHEBI:57540"/>
    </ligand>
</feature>
<feature type="binding site" evidence="2">
    <location>
        <position position="235"/>
    </location>
    <ligand>
        <name>L-ornithine</name>
        <dbReference type="ChEBI" id="CHEBI:46911"/>
    </ligand>
</feature>
<feature type="binding site" evidence="2">
    <location>
        <position position="239"/>
    </location>
    <ligand>
        <name>NAD(+)</name>
        <dbReference type="ChEBI" id="CHEBI:57540"/>
    </ligand>
</feature>
<feature type="binding site" evidence="2">
    <location>
        <position position="300"/>
    </location>
    <ligand>
        <name>NAD(+)</name>
        <dbReference type="ChEBI" id="CHEBI:57540"/>
    </ligand>
</feature>
<feature type="binding site" evidence="2">
    <location>
        <position position="301"/>
    </location>
    <ligand>
        <name>L-ornithine</name>
        <dbReference type="ChEBI" id="CHEBI:46911"/>
    </ligand>
</feature>
<dbReference type="EC" id="4.3.1.12" evidence="1"/>
<dbReference type="EMBL" id="U57319">
    <property type="protein sequence ID" value="AAC05589.1"/>
    <property type="molecule type" value="Genomic_DNA"/>
</dbReference>
<dbReference type="EMBL" id="AE017224">
    <property type="protein sequence ID" value="AAX75765.1"/>
    <property type="status" value="ALT_INIT"/>
    <property type="molecule type" value="Genomic_DNA"/>
</dbReference>
<dbReference type="SMR" id="Q59175"/>
<dbReference type="EnsemblBacteria" id="AAX75765">
    <property type="protein sequence ID" value="AAX75765"/>
    <property type="gene ID" value="BruAb2_0334"/>
</dbReference>
<dbReference type="KEGG" id="bmb:BruAb2_0334"/>
<dbReference type="HOGENOM" id="CLU_042088_3_2_5"/>
<dbReference type="UniPathway" id="UPA00098">
    <property type="reaction ID" value="UER00357"/>
</dbReference>
<dbReference type="Proteomes" id="UP000000540">
    <property type="component" value="Chromosome II"/>
</dbReference>
<dbReference type="GO" id="GO:0008473">
    <property type="term" value="F:ornithine cyclodeaminase activity"/>
    <property type="evidence" value="ECO:0007669"/>
    <property type="project" value="UniProtKB-EC"/>
</dbReference>
<dbReference type="GO" id="GO:0006525">
    <property type="term" value="P:arginine metabolic process"/>
    <property type="evidence" value="ECO:0007669"/>
    <property type="project" value="UniProtKB-KW"/>
</dbReference>
<dbReference type="GO" id="GO:0055129">
    <property type="term" value="P:L-proline biosynthetic process"/>
    <property type="evidence" value="ECO:0007669"/>
    <property type="project" value="UniProtKB-UniPathway"/>
</dbReference>
<dbReference type="Gene3D" id="3.40.50.720">
    <property type="entry name" value="NAD(P)-binding Rossmann-like Domain"/>
    <property type="match status" value="1"/>
</dbReference>
<dbReference type="Gene3D" id="3.30.1780.10">
    <property type="entry name" value="ornithine cyclodeaminase, domain 1"/>
    <property type="match status" value="1"/>
</dbReference>
<dbReference type="InterPro" id="IPR036291">
    <property type="entry name" value="NAD(P)-bd_dom_sf"/>
</dbReference>
<dbReference type="InterPro" id="IPR003462">
    <property type="entry name" value="ODC_Mu_crystall"/>
</dbReference>
<dbReference type="InterPro" id="IPR023401">
    <property type="entry name" value="ODC_N"/>
</dbReference>
<dbReference type="NCBIfam" id="NF005762">
    <property type="entry name" value="PRK07589.1"/>
    <property type="match status" value="1"/>
</dbReference>
<dbReference type="PANTHER" id="PTHR13812">
    <property type="entry name" value="KETIMINE REDUCTASE MU-CRYSTALLIN"/>
    <property type="match status" value="1"/>
</dbReference>
<dbReference type="PANTHER" id="PTHR13812:SF19">
    <property type="entry name" value="KETIMINE REDUCTASE MU-CRYSTALLIN"/>
    <property type="match status" value="1"/>
</dbReference>
<dbReference type="Pfam" id="PF02423">
    <property type="entry name" value="OCD_Mu_crystall"/>
    <property type="match status" value="1"/>
</dbReference>
<dbReference type="SUPFAM" id="SSF51735">
    <property type="entry name" value="NAD(P)-binding Rossmann-fold domains"/>
    <property type="match status" value="1"/>
</dbReference>
<protein>
    <recommendedName>
        <fullName evidence="3">Ornithine cyclodeaminase</fullName>
        <shortName evidence="3">OCD</shortName>
        <ecNumber evidence="1">4.3.1.12</ecNumber>
    </recommendedName>
</protein>
<name>OCD_BRUAB</name>
<gene>
    <name evidence="3" type="primary">ocd</name>
    <name evidence="5" type="synonym">arcB</name>
    <name type="ordered locus">BruAb2_0334</name>
</gene>
<sequence length="359" mass="39420">MMTQPNLNIVPFVSVDHMMKLVLRVGVETFLKELAGYVEEDFRRWQNFDKTPRVASHSKEGVIELMPTSDGTLYGFKYVNGHPKNTRDGLQTVTAFGVLADVGSGYPMLLTEMTILTALRTAATSAVAAKHLAPKNARTMAIIGNGAQSEFQALAFKAILGVDKLRLYDLDPQATAKCIRNLQGAGFNIVACKSVEEAVEGADIITTVTADKANATILTDNMVGAGVHINAVGGDCSGKTELHGDILRRSDIFVEYPPQTRIEGEIQQLPEDYPVNELWEVITGRIAGRKDARQITLFDSVGFATEDFSALRYVRDKLKDTGLYEQLDLLADPDEPRDLYGMLLRHEKLLQSESTKPAA</sequence>
<accession>Q59175</accession>
<accession>Q579B9</accession>